<accession>B9IZ16</accession>
<dbReference type="EC" id="3.6.5.-" evidence="1"/>
<dbReference type="EMBL" id="CP000227">
    <property type="protein sequence ID" value="ACM14655.1"/>
    <property type="molecule type" value="Genomic_DNA"/>
</dbReference>
<dbReference type="SMR" id="B9IZ16"/>
<dbReference type="KEGG" id="bcq:BCQ_4228"/>
<dbReference type="HOGENOM" id="CLU_011747_2_1_9"/>
<dbReference type="Proteomes" id="UP000000441">
    <property type="component" value="Chromosome"/>
</dbReference>
<dbReference type="GO" id="GO:0005737">
    <property type="term" value="C:cytoplasm"/>
    <property type="evidence" value="ECO:0007669"/>
    <property type="project" value="UniProtKB-SubCell"/>
</dbReference>
<dbReference type="GO" id="GO:0005525">
    <property type="term" value="F:GTP binding"/>
    <property type="evidence" value="ECO:0007669"/>
    <property type="project" value="UniProtKB-UniRule"/>
</dbReference>
<dbReference type="GO" id="GO:0003924">
    <property type="term" value="F:GTPase activity"/>
    <property type="evidence" value="ECO:0007669"/>
    <property type="project" value="UniProtKB-UniRule"/>
</dbReference>
<dbReference type="GO" id="GO:0000287">
    <property type="term" value="F:magnesium ion binding"/>
    <property type="evidence" value="ECO:0007669"/>
    <property type="project" value="InterPro"/>
</dbReference>
<dbReference type="GO" id="GO:0042254">
    <property type="term" value="P:ribosome biogenesis"/>
    <property type="evidence" value="ECO:0007669"/>
    <property type="project" value="UniProtKB-UniRule"/>
</dbReference>
<dbReference type="CDD" id="cd01898">
    <property type="entry name" value="Obg"/>
    <property type="match status" value="1"/>
</dbReference>
<dbReference type="FunFam" id="2.70.210.12:FF:000001">
    <property type="entry name" value="GTPase Obg"/>
    <property type="match status" value="1"/>
</dbReference>
<dbReference type="FunFam" id="3.40.50.300:FF:000515">
    <property type="entry name" value="GTPase Obg"/>
    <property type="match status" value="1"/>
</dbReference>
<dbReference type="Gene3D" id="3.30.300.350">
    <property type="entry name" value="GTP-binding protein OBG, C-terminal domain"/>
    <property type="match status" value="1"/>
</dbReference>
<dbReference type="Gene3D" id="2.70.210.12">
    <property type="entry name" value="GTP1/OBG domain"/>
    <property type="match status" value="1"/>
</dbReference>
<dbReference type="Gene3D" id="3.40.50.300">
    <property type="entry name" value="P-loop containing nucleotide triphosphate hydrolases"/>
    <property type="match status" value="1"/>
</dbReference>
<dbReference type="HAMAP" id="MF_01454">
    <property type="entry name" value="GTPase_Obg"/>
    <property type="match status" value="1"/>
</dbReference>
<dbReference type="InterPro" id="IPR031167">
    <property type="entry name" value="G_OBG"/>
</dbReference>
<dbReference type="InterPro" id="IPR006073">
    <property type="entry name" value="GTP-bd"/>
</dbReference>
<dbReference type="InterPro" id="IPR014100">
    <property type="entry name" value="GTP-bd_Obg/CgtA"/>
</dbReference>
<dbReference type="InterPro" id="IPR036346">
    <property type="entry name" value="GTP-bd_prot_GTP1/OBG_C_sf"/>
</dbReference>
<dbReference type="InterPro" id="IPR006074">
    <property type="entry name" value="GTP1-OBG_CS"/>
</dbReference>
<dbReference type="InterPro" id="IPR006169">
    <property type="entry name" value="GTP1_OBG_dom"/>
</dbReference>
<dbReference type="InterPro" id="IPR036726">
    <property type="entry name" value="GTP1_OBG_dom_sf"/>
</dbReference>
<dbReference type="InterPro" id="IPR045086">
    <property type="entry name" value="OBG_GTPase"/>
</dbReference>
<dbReference type="InterPro" id="IPR015349">
    <property type="entry name" value="OCT_dom"/>
</dbReference>
<dbReference type="InterPro" id="IPR027417">
    <property type="entry name" value="P-loop_NTPase"/>
</dbReference>
<dbReference type="InterPro" id="IPR005225">
    <property type="entry name" value="Small_GTP-bd"/>
</dbReference>
<dbReference type="NCBIfam" id="TIGR02729">
    <property type="entry name" value="Obg_CgtA"/>
    <property type="match status" value="1"/>
</dbReference>
<dbReference type="NCBIfam" id="TIGR03595">
    <property type="entry name" value="Obg_CgtA_exten"/>
    <property type="match status" value="1"/>
</dbReference>
<dbReference type="NCBIfam" id="NF008954">
    <property type="entry name" value="PRK12296.1"/>
    <property type="match status" value="1"/>
</dbReference>
<dbReference type="NCBIfam" id="NF008955">
    <property type="entry name" value="PRK12297.1"/>
    <property type="match status" value="1"/>
</dbReference>
<dbReference type="NCBIfam" id="NF008956">
    <property type="entry name" value="PRK12299.1"/>
    <property type="match status" value="1"/>
</dbReference>
<dbReference type="NCBIfam" id="TIGR00231">
    <property type="entry name" value="small_GTP"/>
    <property type="match status" value="1"/>
</dbReference>
<dbReference type="PANTHER" id="PTHR11702">
    <property type="entry name" value="DEVELOPMENTALLY REGULATED GTP-BINDING PROTEIN-RELATED"/>
    <property type="match status" value="1"/>
</dbReference>
<dbReference type="PANTHER" id="PTHR11702:SF31">
    <property type="entry name" value="MITOCHONDRIAL RIBOSOME-ASSOCIATED GTPASE 2"/>
    <property type="match status" value="1"/>
</dbReference>
<dbReference type="Pfam" id="PF09269">
    <property type="entry name" value="DUF1967"/>
    <property type="match status" value="1"/>
</dbReference>
<dbReference type="Pfam" id="PF01018">
    <property type="entry name" value="GTP1_OBG"/>
    <property type="match status" value="1"/>
</dbReference>
<dbReference type="Pfam" id="PF01926">
    <property type="entry name" value="MMR_HSR1"/>
    <property type="match status" value="1"/>
</dbReference>
<dbReference type="PIRSF" id="PIRSF002401">
    <property type="entry name" value="GTP_bd_Obg/CgtA"/>
    <property type="match status" value="1"/>
</dbReference>
<dbReference type="PRINTS" id="PR00326">
    <property type="entry name" value="GTP1OBG"/>
</dbReference>
<dbReference type="SUPFAM" id="SSF102741">
    <property type="entry name" value="Obg GTP-binding protein C-terminal domain"/>
    <property type="match status" value="1"/>
</dbReference>
<dbReference type="SUPFAM" id="SSF82051">
    <property type="entry name" value="Obg GTP-binding protein N-terminal domain"/>
    <property type="match status" value="1"/>
</dbReference>
<dbReference type="SUPFAM" id="SSF52540">
    <property type="entry name" value="P-loop containing nucleoside triphosphate hydrolases"/>
    <property type="match status" value="1"/>
</dbReference>
<dbReference type="PROSITE" id="PS51710">
    <property type="entry name" value="G_OBG"/>
    <property type="match status" value="1"/>
</dbReference>
<dbReference type="PROSITE" id="PS00905">
    <property type="entry name" value="GTP1_OBG"/>
    <property type="match status" value="1"/>
</dbReference>
<dbReference type="PROSITE" id="PS51883">
    <property type="entry name" value="OBG"/>
    <property type="match status" value="1"/>
</dbReference>
<dbReference type="PROSITE" id="PS51881">
    <property type="entry name" value="OCT"/>
    <property type="match status" value="1"/>
</dbReference>
<sequence>MFVDQVKIYVKGGDGGNGMVAYRREKYVPKGGPAGGDGGKGADVVFVVEEGLRTLMDFRYQRHFKADRGQHGMSKGQHGRKSEDLIVKVPPGTVVKDEKTGQILADLVTHGQTAVIAKGGRGGRGNSRFATATNPAPEIAENGEPGQERDVILELKVLADVGLVGFPSVGKSTLLSVVSSARPKIAEYHFTTIVPNLGVVETGDNRSFVMADLPGLIEGAHAGVGLGHQFLRHIERTRVIVHVIDMSGLEGRDPYEDYVTINNELKEYNLRLTERPQVVVANKMDMPDAEENLQAFKEKVGDEVKIFPISAVTKQGVRDLLFEVANLLETTPEFPIHEVADESDTSVMYKLETEGVKFDITRESDGTFVISGYDIEKTFKMTDFSRDESVRRFARQMRGMGIDEALRARGAKDGDIVKILEYEFEFID</sequence>
<feature type="chain" id="PRO_0000385722" description="GTPase Obg">
    <location>
        <begin position="1"/>
        <end position="428"/>
    </location>
</feature>
<feature type="domain" description="Obg" evidence="3">
    <location>
        <begin position="1"/>
        <end position="158"/>
    </location>
</feature>
<feature type="domain" description="OBG-type G" evidence="1">
    <location>
        <begin position="159"/>
        <end position="329"/>
    </location>
</feature>
<feature type="domain" description="OCT" evidence="2">
    <location>
        <begin position="350"/>
        <end position="428"/>
    </location>
</feature>
<feature type="binding site" evidence="1">
    <location>
        <begin position="165"/>
        <end position="172"/>
    </location>
    <ligand>
        <name>GTP</name>
        <dbReference type="ChEBI" id="CHEBI:37565"/>
    </ligand>
</feature>
<feature type="binding site" evidence="1">
    <location>
        <position position="172"/>
    </location>
    <ligand>
        <name>Mg(2+)</name>
        <dbReference type="ChEBI" id="CHEBI:18420"/>
    </ligand>
</feature>
<feature type="binding site" evidence="1">
    <location>
        <begin position="190"/>
        <end position="194"/>
    </location>
    <ligand>
        <name>GTP</name>
        <dbReference type="ChEBI" id="CHEBI:37565"/>
    </ligand>
</feature>
<feature type="binding site" evidence="1">
    <location>
        <position position="192"/>
    </location>
    <ligand>
        <name>Mg(2+)</name>
        <dbReference type="ChEBI" id="CHEBI:18420"/>
    </ligand>
</feature>
<feature type="binding site" evidence="1">
    <location>
        <begin position="212"/>
        <end position="215"/>
    </location>
    <ligand>
        <name>GTP</name>
        <dbReference type="ChEBI" id="CHEBI:37565"/>
    </ligand>
</feature>
<feature type="binding site" evidence="1">
    <location>
        <begin position="282"/>
        <end position="285"/>
    </location>
    <ligand>
        <name>GTP</name>
        <dbReference type="ChEBI" id="CHEBI:37565"/>
    </ligand>
</feature>
<feature type="binding site" evidence="1">
    <location>
        <begin position="310"/>
        <end position="312"/>
    </location>
    <ligand>
        <name>GTP</name>
        <dbReference type="ChEBI" id="CHEBI:37565"/>
    </ligand>
</feature>
<keyword id="KW-0963">Cytoplasm</keyword>
<keyword id="KW-0342">GTP-binding</keyword>
<keyword id="KW-0378">Hydrolase</keyword>
<keyword id="KW-0460">Magnesium</keyword>
<keyword id="KW-0479">Metal-binding</keyword>
<keyword id="KW-0547">Nucleotide-binding</keyword>
<gene>
    <name evidence="1" type="primary">obg</name>
    <name type="ordered locus">BCQ_4228</name>
</gene>
<protein>
    <recommendedName>
        <fullName evidence="1">GTPase Obg</fullName>
        <ecNumber evidence="1">3.6.5.-</ecNumber>
    </recommendedName>
    <alternativeName>
        <fullName evidence="1">GTP-binding protein Obg</fullName>
    </alternativeName>
</protein>
<organism>
    <name type="scientific">Bacillus cereus (strain Q1)</name>
    <dbReference type="NCBI Taxonomy" id="361100"/>
    <lineage>
        <taxon>Bacteria</taxon>
        <taxon>Bacillati</taxon>
        <taxon>Bacillota</taxon>
        <taxon>Bacilli</taxon>
        <taxon>Bacillales</taxon>
        <taxon>Bacillaceae</taxon>
        <taxon>Bacillus</taxon>
        <taxon>Bacillus cereus group</taxon>
    </lineage>
</organism>
<comment type="function">
    <text evidence="1">An essential GTPase which binds GTP, GDP and possibly (p)ppGpp with moderate affinity, with high nucleotide exchange rates and a fairly low GTP hydrolysis rate. Plays a role in control of the cell cycle, stress response, ribosome biogenesis and in those bacteria that undergo differentiation, in morphogenesis control.</text>
</comment>
<comment type="cofactor">
    <cofactor evidence="1">
        <name>Mg(2+)</name>
        <dbReference type="ChEBI" id="CHEBI:18420"/>
    </cofactor>
</comment>
<comment type="subunit">
    <text evidence="1">Monomer.</text>
</comment>
<comment type="subcellular location">
    <subcellularLocation>
        <location evidence="1">Cytoplasm</location>
    </subcellularLocation>
</comment>
<comment type="similarity">
    <text evidence="1">Belongs to the TRAFAC class OBG-HflX-like GTPase superfamily. OBG GTPase family.</text>
</comment>
<evidence type="ECO:0000255" key="1">
    <source>
        <dbReference type="HAMAP-Rule" id="MF_01454"/>
    </source>
</evidence>
<evidence type="ECO:0000255" key="2">
    <source>
        <dbReference type="PROSITE-ProRule" id="PRU01229"/>
    </source>
</evidence>
<evidence type="ECO:0000255" key="3">
    <source>
        <dbReference type="PROSITE-ProRule" id="PRU01231"/>
    </source>
</evidence>
<reference key="1">
    <citation type="journal article" date="2009" name="J. Bacteriol.">
        <title>Complete genome sequence of the extremophilic Bacillus cereus strain Q1 with industrial applications.</title>
        <authorList>
            <person name="Xiong Z."/>
            <person name="Jiang Y."/>
            <person name="Qi D."/>
            <person name="Lu H."/>
            <person name="Yang F."/>
            <person name="Yang J."/>
            <person name="Chen L."/>
            <person name="Sun L."/>
            <person name="Xu X."/>
            <person name="Xue Y."/>
            <person name="Zhu Y."/>
            <person name="Jin Q."/>
        </authorList>
    </citation>
    <scope>NUCLEOTIDE SEQUENCE [LARGE SCALE GENOMIC DNA]</scope>
    <source>
        <strain>Q1</strain>
    </source>
</reference>
<name>OBG_BACCQ</name>
<proteinExistence type="inferred from homology"/>